<name>PTXS_PSEDL</name>
<gene>
    <name evidence="4" type="primary">ptxS</name>
</gene>
<accession>A0A167V873</accession>
<dbReference type="EMBL" id="KU168041">
    <property type="protein sequence ID" value="ANB66399.1"/>
    <property type="molecule type" value="Genomic_DNA"/>
</dbReference>
<dbReference type="SMR" id="A0A167V873"/>
<dbReference type="GO" id="GO:0003700">
    <property type="term" value="F:DNA-binding transcription factor activity"/>
    <property type="evidence" value="ECO:0007669"/>
    <property type="project" value="TreeGrafter"/>
</dbReference>
<dbReference type="GO" id="GO:0000976">
    <property type="term" value="F:transcription cis-regulatory region binding"/>
    <property type="evidence" value="ECO:0007669"/>
    <property type="project" value="TreeGrafter"/>
</dbReference>
<dbReference type="CDD" id="cd01392">
    <property type="entry name" value="HTH_LacI"/>
    <property type="match status" value="1"/>
</dbReference>
<dbReference type="CDD" id="cd06283">
    <property type="entry name" value="PBP1_RegR_EndR_KdgR-like"/>
    <property type="match status" value="1"/>
</dbReference>
<dbReference type="FunFam" id="3.40.50.2300:FF:000339">
    <property type="entry name" value="Transcriptional regulator PtxS"/>
    <property type="match status" value="1"/>
</dbReference>
<dbReference type="Gene3D" id="3.40.50.2300">
    <property type="match status" value="2"/>
</dbReference>
<dbReference type="Gene3D" id="1.10.260.40">
    <property type="entry name" value="lambda repressor-like DNA-binding domains"/>
    <property type="match status" value="1"/>
</dbReference>
<dbReference type="InterPro" id="IPR000843">
    <property type="entry name" value="HTH_LacI"/>
</dbReference>
<dbReference type="InterPro" id="IPR001647">
    <property type="entry name" value="HTH_TetR"/>
</dbReference>
<dbReference type="InterPro" id="IPR046335">
    <property type="entry name" value="LacI/GalR-like_sensor"/>
</dbReference>
<dbReference type="InterPro" id="IPR010982">
    <property type="entry name" value="Lambda_DNA-bd_dom_sf"/>
</dbReference>
<dbReference type="InterPro" id="IPR028082">
    <property type="entry name" value="Peripla_BP_I"/>
</dbReference>
<dbReference type="PANTHER" id="PTHR30146">
    <property type="entry name" value="LACI-RELATED TRANSCRIPTIONAL REPRESSOR"/>
    <property type="match status" value="1"/>
</dbReference>
<dbReference type="PANTHER" id="PTHR30146:SF145">
    <property type="entry name" value="RIBOSE OPERON REPRESSOR"/>
    <property type="match status" value="1"/>
</dbReference>
<dbReference type="Pfam" id="PF00356">
    <property type="entry name" value="LacI"/>
    <property type="match status" value="1"/>
</dbReference>
<dbReference type="Pfam" id="PF13377">
    <property type="entry name" value="Peripla_BP_3"/>
    <property type="match status" value="1"/>
</dbReference>
<dbReference type="SMART" id="SM00354">
    <property type="entry name" value="HTH_LACI"/>
    <property type="match status" value="1"/>
</dbReference>
<dbReference type="SUPFAM" id="SSF47413">
    <property type="entry name" value="lambda repressor-like DNA-binding domains"/>
    <property type="match status" value="1"/>
</dbReference>
<dbReference type="SUPFAM" id="SSF53822">
    <property type="entry name" value="Periplasmic binding protein-like I"/>
    <property type="match status" value="1"/>
</dbReference>
<dbReference type="PROSITE" id="PS00356">
    <property type="entry name" value="HTH_LACI_1"/>
    <property type="match status" value="1"/>
</dbReference>
<dbReference type="PROSITE" id="PS50932">
    <property type="entry name" value="HTH_LACI_2"/>
    <property type="match status" value="1"/>
</dbReference>
<keyword id="KW-0238">DNA-binding</keyword>
<keyword id="KW-0678">Repressor</keyword>
<keyword id="KW-0804">Transcription</keyword>
<keyword id="KW-0805">Transcription regulation</keyword>
<organism>
    <name type="scientific">Pseudomonas plecoglossicida</name>
    <dbReference type="NCBI Taxonomy" id="70775"/>
    <lineage>
        <taxon>Bacteria</taxon>
        <taxon>Pseudomonadati</taxon>
        <taxon>Pseudomonadota</taxon>
        <taxon>Gammaproteobacteria</taxon>
        <taxon>Pseudomonadales</taxon>
        <taxon>Pseudomonadaceae</taxon>
        <taxon>Pseudomonas</taxon>
    </lineage>
</organism>
<sequence length="340" mass="36684">MDKTLSQARTRVTISEVAQAAGVSKATVSRYIGGDRQLLADATAQRIEAVIEQLGYRPNRMASALKRGRTRLIGMLLADIRNPYSVAVMHGVETACREHGYSLVVCNTDCDDARERQHLQALQAYNVDGLIVNTLGHHAGELASLAQELPMVLVDRQLAELQTDLVGLDNADAVEQALDHLHACGYRDILAVSEPLDGTSSRQERVAAFQASIARRSGLRGQVLEVSANLPGQLAAFLASAGHGPQALFSCNGVATLEVMRHLHGRGEQLFQQLGLVALDDLDWYPLVGGGITALAQPTERIAAAAVQCLLERLQGSQLPARRLDLRAQLIVRGSTPIRN</sequence>
<protein>
    <recommendedName>
        <fullName evidence="3">HTH-type transcriptional regulator PtxS</fullName>
    </recommendedName>
</protein>
<reference key="1">
    <citation type="submission" date="2015-11" db="EMBL/GenBank/DDBJ databases">
        <title>Cloning and bioinformatics analysis of 2-ketogluconate metabolic regulatory protein PtxS gene from Pseudomonas plecoglossicida JUIM01.</title>
        <authorList>
            <person name="Sun W."/>
            <person name="Zhang X."/>
            <person name="Wang D."/>
            <person name="Cui F."/>
        </authorList>
    </citation>
    <scope>NUCLEOTIDE SEQUENCE [GENOMIC DNA]</scope>
    <source>
        <strain>JUIM01</strain>
    </source>
</reference>
<reference key="2">
    <citation type="journal article" date="2021" name="Int. J. Biol. Macromol.">
        <title>Characterization of a transcriptional regulator PtxS from Pseudomonas plecoglossicida for regulating 2-ketogluconic acid metabolism.</title>
        <authorList>
            <person name="Sun L."/>
            <person name="Wang D."/>
            <person name="Sun W."/>
            <person name="Zhang X."/>
            <person name="Cui F."/>
            <person name="Su C."/>
            <person name="Zhang X."/>
            <person name="Xu G."/>
            <person name="Shi J."/>
            <person name="Xu Z."/>
        </authorList>
    </citation>
    <scope>FUNCTION</scope>
    <scope>ACTIVITY REGULATION</scope>
    <scope>SUBUNIT</scope>
    <scope>DOMAIN</scope>
    <scope>IDENTIFICATION BY MASS SPECTROMETRY</scope>
    <source>
        <strain>JUIM01</strain>
    </source>
</reference>
<evidence type="ECO:0000255" key="1">
    <source>
        <dbReference type="PROSITE-ProRule" id="PRU00111"/>
    </source>
</evidence>
<evidence type="ECO:0000269" key="2">
    <source>
    </source>
</evidence>
<evidence type="ECO:0000305" key="3"/>
<evidence type="ECO:0000312" key="4">
    <source>
        <dbReference type="EMBL" id="ANB66399.1"/>
    </source>
</evidence>
<feature type="chain" id="PRO_0000456055" description="HTH-type transcriptional regulator PtxS">
    <location>
        <begin position="1"/>
        <end position="340"/>
    </location>
</feature>
<feature type="domain" description="HTH lacI-type" evidence="1">
    <location>
        <begin position="12"/>
        <end position="67"/>
    </location>
</feature>
<feature type="DNA-binding region" description="H-T-H motif" evidence="1">
    <location>
        <begin position="14"/>
        <end position="33"/>
    </location>
</feature>
<proteinExistence type="evidence at protein level"/>
<comment type="function">
    <text evidence="2">Involved in the regulation of 2-ketogluconic acid metabolism via the control of the expression of the kgu operon (PubMed:33529626). Binds directly to a 14-bp palindrome sequence via its conserved HTH motif (PubMed:33529626).</text>
</comment>
<comment type="activity regulation">
    <text evidence="2">2-ketogluconate acts as a molecular effector and causes dissociation of PtxS from its target promoter (PubMed:33529626). Glucose negatively affects the molecular binding of PtxS and 2KGA, and gluconic acid inhibits the PtxS-2KGA binding reaction (PubMed:33529626).</text>
</comment>
<comment type="subunit">
    <text evidence="2">Homodimer.</text>
</comment>
<comment type="domain">
    <text evidence="2">Contains an N-terminal helix-turn-helix DNA-binding domain and a C-terminal domain that binds the effector.</text>
</comment>